<organism>
    <name type="scientific">Saccharomyces cerevisiae (strain ATCC 204508 / S288c)</name>
    <name type="common">Baker's yeast</name>
    <dbReference type="NCBI Taxonomy" id="559292"/>
    <lineage>
        <taxon>Eukaryota</taxon>
        <taxon>Fungi</taxon>
        <taxon>Dikarya</taxon>
        <taxon>Ascomycota</taxon>
        <taxon>Saccharomycotina</taxon>
        <taxon>Saccharomycetes</taxon>
        <taxon>Saccharomycetales</taxon>
        <taxon>Saccharomycetaceae</taxon>
        <taxon>Saccharomyces</taxon>
    </lineage>
</organism>
<gene>
    <name type="primary">MLP1</name>
    <name type="ordered locus">YKR095W</name>
    <name type="ORF">YKR415</name>
</gene>
<proteinExistence type="evidence at protein level"/>
<sequence length="1875" mass="218456">MSDHDTPMESIQNGENSDERLNAIASFFGCSLEQVKSFDGDVVKHLNDKLLQFNELKSENLKVTVSFDELKASSLKKIDGLKTEMENVIRENDKIRKERNDTFVKFESVENEKMKLSSELEFVKRKLDDLTEEKKETQSNQQRTLKILDERLKEIELVRVENNRSNSECKKLRSTIMDLETKQQGYITNDLNSRTELERKTQELTLLQSNNDWLEKELRSKNEQYLSYRQKTDKVILDIRNELNRLRNDFQMERTNNDVLKQKNNELSKSLQEKLLEIKGLSDSLNSEKQEFSAEMSLKQRLVDLLESQLNAVKEELNSIRELNTAKVIADDSKKQTPENEDLLKELQLTKEKLAQCEKECLRLSSITDEADEDNENLSAKSSSDFIFLKKQLIKERRTKEHLQNQIETFIVELEHKVPIINSFKERTDMLENELNNAALLLEHTSNEKNAKVKELNAKNQKLVECENDLQTLTKQRLDLCRQIQYLLITNSVSNDSKGPLRKEEIQFIQNIMQEDDSTITESDSQKVVTERLVEFKNIIQLQEKNAELLKVVRNLADKLESKEKKSKQSLQKIESETVNEAKEAIITLKSEKMDLESRIEELQKELEELKTSVPNEDASYSNVTIKQLTETKRDLESQVQDLQTRISQITRESTENMSLLNKEIQDLYDSKSDISIKLGKEKSSRILAEERFKLLSNTLDLTKAENDQLRKRFDYLQNTILKQDSKTHETLNEYVSCKSKLSIVETELLNLKEEQKLRVHLEKNLKQELNKLSPEKDSLRIMVTQLQTLQKEREDLLEETRKSCQKKIDELEDALSELKKETSQKDHHIKQLEEDNNSNIEWYQNKIEALKKDYESVITSVDSKQTDIEKLQYKVKSLEKEIEEDKIRLHTYNVMDETINDDSLRKELEKSKINLTDAYSQIKEYKDLYETTSQSLQQTNSKLDESFKDFTNQIKNLTDEKTSLEDKISLLKEQMFNLNNELDLQKKGMEKEKADFKKRISILQNNNKEVEAVKSEYESKLSKIQNDLDQQTIYANTAQNNYEQELQKHADVSKTISELREQLHTYKGQVKTLNLSRDQLENALKENEKSWSSQKESLLEQLDLSNSRIEDLSSQNKLLYDQIQIYTAADKEVNNSTNGPGLNNILITLRRERDILDTKVTVAERDAKMLRQKISLMDVELQDARTKLDNSRVEKENHSSIIQQHDDIMEKLNQLNLLRESNITLRNELENNNNKKKELQSELDKLKQNVAPIESELTALKYSMQEKEQELKLAKEEVHRWKKRSQDILEKHEQLSSSDYEKLESEIENLKEELENKERQGAEAEEKFNRLRRQAQERLKTSKLSQDSLTEQVNSLRDAKNVLENSLSEANARIEELQNAKVAQGNNQLEAIRKLQEDAEKASRELQAKLEESTTSYESTINGLNEEITTLKEEIEKQRQIQQQLQATSANEQNDLSNIVESMKKSFEEDKIKFIKEKTQEVNEKILEAQERLNQPSNINMEEIKKKWESEHEQEVSQKIREAEEALKKRIRLPTEEKINKIIERKKEELEKEFEEKVEERIKSMEQSGEIDVVLRKQLEAKVQEKQKELENEYNKKLQEELKDVPHSSHISDDERDKLRAEIESRLREEFNNELQAIKKKSFDEGKQQAMMKTTLLERKLAKMESQLSETKQSAESPPKSVNNVQNPLLGLPRKIEENSNSPFNPLLSGEKLLKLNSKSSSGGFNPFTSPSPNKHLQNDNDKRESLANKTDPPTHLEPSFNIPASRGLISSSSTLSTDTNDEELTSNNPAQKDSSNRNVQSEEDTEKKKEGEPVKRGEAIEEQTKSNKRPIDEVGELKNDEDDTTENINESKKIKTEDEEEKETDKVNDENSI</sequence>
<feature type="initiator methionine" description="Removed" evidence="16">
    <location>
        <position position="1"/>
    </location>
</feature>
<feature type="chain" id="PRO_0000096501" description="Protein MLP1">
    <location>
        <begin position="2"/>
        <end position="1875"/>
    </location>
</feature>
<feature type="region of interest" description="Disordered" evidence="2">
    <location>
        <begin position="1641"/>
        <end position="1689"/>
    </location>
</feature>
<feature type="region of interest" description="Disordered" evidence="2">
    <location>
        <begin position="1716"/>
        <end position="1875"/>
    </location>
</feature>
<feature type="coiled-coil region" evidence="1">
    <location>
        <begin position="69"/>
        <end position="487"/>
    </location>
</feature>
<feature type="coiled-coil region" evidence="1">
    <location>
        <begin position="531"/>
        <end position="1678"/>
    </location>
</feature>
<feature type="coiled-coil region" evidence="1">
    <location>
        <begin position="1834"/>
        <end position="1866"/>
    </location>
</feature>
<feature type="short sequence motif" description="Required for nuclear localization">
    <location>
        <begin position="1496"/>
        <end position="1565"/>
    </location>
</feature>
<feature type="compositionally biased region" description="Polar residues" evidence="2">
    <location>
        <begin position="1667"/>
        <end position="1688"/>
    </location>
</feature>
<feature type="compositionally biased region" description="Low complexity" evidence="2">
    <location>
        <begin position="1716"/>
        <end position="1725"/>
    </location>
</feature>
<feature type="compositionally biased region" description="Polar residues" evidence="2">
    <location>
        <begin position="1728"/>
        <end position="1737"/>
    </location>
</feature>
<feature type="compositionally biased region" description="Basic and acidic residues" evidence="2">
    <location>
        <begin position="1738"/>
        <end position="1748"/>
    </location>
</feature>
<feature type="compositionally biased region" description="Polar residues" evidence="2">
    <location>
        <begin position="1787"/>
        <end position="1801"/>
    </location>
</feature>
<feature type="compositionally biased region" description="Basic and acidic residues" evidence="2">
    <location>
        <begin position="1807"/>
        <end position="1840"/>
    </location>
</feature>
<feature type="compositionally biased region" description="Basic and acidic residues" evidence="2">
    <location>
        <begin position="1865"/>
        <end position="1875"/>
    </location>
</feature>
<feature type="modified residue" description="N-acetylserine" evidence="16">
    <location>
        <position position="2"/>
    </location>
</feature>
<feature type="modified residue" description="Phosphothreonine" evidence="14 15">
    <location>
        <position position="337"/>
    </location>
</feature>
<feature type="modified residue" description="Phosphoserine" evidence="14">
    <location>
        <position position="379"/>
    </location>
</feature>
<feature type="modified residue" description="Phosphoserine" evidence="14">
    <location>
        <position position="1670"/>
    </location>
</feature>
<feature type="modified residue" description="Phosphoserine" evidence="14 15">
    <location>
        <position position="1710"/>
    </location>
</feature>
<feature type="modified residue" description="Phosphoserine" evidence="15">
    <location>
        <position position="1733"/>
    </location>
</feature>
<feature type="modified residue" description="Phosphoserine" evidence="14">
    <location>
        <position position="1803"/>
    </location>
</feature>
<feature type="sequence conflict" description="In Ref. 1; AAA34783." evidence="13" ref="1">
    <original>R</original>
    <variation>A</variation>
    <location>
        <position position="301"/>
    </location>
</feature>
<keyword id="KW-0007">Acetylation</keyword>
<keyword id="KW-0175">Coiled coil</keyword>
<keyword id="KW-0227">DNA damage</keyword>
<keyword id="KW-0234">DNA repair</keyword>
<keyword id="KW-0509">mRNA transport</keyword>
<keyword id="KW-0906">Nuclear pore complex</keyword>
<keyword id="KW-0539">Nucleus</keyword>
<keyword id="KW-0597">Phosphoprotein</keyword>
<keyword id="KW-0653">Protein transport</keyword>
<keyword id="KW-1185">Reference proteome</keyword>
<keyword id="KW-0811">Translocation</keyword>
<keyword id="KW-0813">Transport</keyword>
<accession>Q02455</accession>
<accession>D6VXF5</accession>
<name>MLP1_YEAST</name>
<reference key="1">
    <citation type="journal article" date="1993" name="Mol. Gen. Genet.">
        <title>A new yeast gene with a myosin-like heptad repeat structure.</title>
        <authorList>
            <person name="Koelling R."/>
            <person name="Nguyen T."/>
            <person name="Chen E.Y."/>
            <person name="Botstein D."/>
        </authorList>
    </citation>
    <scope>NUCLEOTIDE SEQUENCE [GENOMIC DNA]</scope>
    <source>
        <strain>ATCC 204508 / S288c</strain>
    </source>
</reference>
<reference key="2">
    <citation type="journal article" date="1993" name="Yeast">
        <title>The complete sequence of a 15,820 bp segment of Saccharomyces cerevisiae chromosome XI contains the UBI2 and MPL1 genes and three new open reading frames.</title>
        <authorList>
            <person name="Bou G."/>
            <person name="Esteban P.F."/>
            <person name="Baladron V."/>
            <person name="Gonzalez G.A."/>
            <person name="Cantalejo J.G."/>
            <person name="Remacha M.A."/>
            <person name="Jimenez A."/>
            <person name="del Rey F."/>
            <person name="Ballesta J.P.G."/>
            <person name="Revuelta J.L."/>
        </authorList>
    </citation>
    <scope>NUCLEOTIDE SEQUENCE [GENOMIC DNA]</scope>
</reference>
<reference key="3">
    <citation type="journal article" date="1994" name="Nature">
        <title>Complete DNA sequence of yeast chromosome XI.</title>
        <authorList>
            <person name="Dujon B."/>
            <person name="Alexandraki D."/>
            <person name="Andre B."/>
            <person name="Ansorge W."/>
            <person name="Baladron V."/>
            <person name="Ballesta J.P.G."/>
            <person name="Banrevi A."/>
            <person name="Bolle P.-A."/>
            <person name="Bolotin-Fukuhara M."/>
            <person name="Bossier P."/>
            <person name="Bou G."/>
            <person name="Boyer J."/>
            <person name="Buitrago M.J."/>
            <person name="Cheret G."/>
            <person name="Colleaux L."/>
            <person name="Daignan-Fornier B."/>
            <person name="del Rey F."/>
            <person name="Dion C."/>
            <person name="Domdey H."/>
            <person name="Duesterhoeft A."/>
            <person name="Duesterhus S."/>
            <person name="Entian K.-D."/>
            <person name="Erfle H."/>
            <person name="Esteban P.F."/>
            <person name="Feldmann H."/>
            <person name="Fernandes L."/>
            <person name="Fobo G.M."/>
            <person name="Fritz C."/>
            <person name="Fukuhara H."/>
            <person name="Gabel C."/>
            <person name="Gaillon L."/>
            <person name="Garcia-Cantalejo J.M."/>
            <person name="Garcia-Ramirez J.J."/>
            <person name="Gent M.E."/>
            <person name="Ghazvini M."/>
            <person name="Goffeau A."/>
            <person name="Gonzalez A."/>
            <person name="Grothues D."/>
            <person name="Guerreiro P."/>
            <person name="Hegemann J.H."/>
            <person name="Hewitt N."/>
            <person name="Hilger F."/>
            <person name="Hollenberg C.P."/>
            <person name="Horaitis O."/>
            <person name="Indge K.J."/>
            <person name="Jacquier A."/>
            <person name="James C.M."/>
            <person name="Jauniaux J.-C."/>
            <person name="Jimenez A."/>
            <person name="Keuchel H."/>
            <person name="Kirchrath L."/>
            <person name="Kleine K."/>
            <person name="Koetter P."/>
            <person name="Legrain P."/>
            <person name="Liebl S."/>
            <person name="Louis E.J."/>
            <person name="Maia e Silva A."/>
            <person name="Marck C."/>
            <person name="Monnier A.-L."/>
            <person name="Moestl D."/>
            <person name="Mueller S."/>
            <person name="Obermaier B."/>
            <person name="Oliver S.G."/>
            <person name="Pallier C."/>
            <person name="Pascolo S."/>
            <person name="Pfeiffer F."/>
            <person name="Philippsen P."/>
            <person name="Planta R.J."/>
            <person name="Pohl F.M."/>
            <person name="Pohl T.M."/>
            <person name="Poehlmann R."/>
            <person name="Portetelle D."/>
            <person name="Purnelle B."/>
            <person name="Puzos V."/>
            <person name="Ramezani Rad M."/>
            <person name="Rasmussen S.W."/>
            <person name="Remacha M.A."/>
            <person name="Revuelta J.L."/>
            <person name="Richard G.-F."/>
            <person name="Rieger M."/>
            <person name="Rodrigues-Pousada C."/>
            <person name="Rose M."/>
            <person name="Rupp T."/>
            <person name="Santos M.A."/>
            <person name="Schwager C."/>
            <person name="Sensen C."/>
            <person name="Skala J."/>
            <person name="Soares H."/>
            <person name="Sor F."/>
            <person name="Stegemann J."/>
            <person name="Tettelin H."/>
            <person name="Thierry A."/>
            <person name="Tzermia M."/>
            <person name="Urrestarazu L.A."/>
            <person name="van Dyck L."/>
            <person name="van Vliet-Reedijk J.C."/>
            <person name="Valens M."/>
            <person name="Vandenbol M."/>
            <person name="Vilela C."/>
            <person name="Vissers S."/>
            <person name="von Wettstein D."/>
            <person name="Voss H."/>
            <person name="Wiemann S."/>
            <person name="Xu G."/>
            <person name="Zimmermann J."/>
            <person name="Haasemann M."/>
            <person name="Becker I."/>
            <person name="Mewes H.-W."/>
        </authorList>
    </citation>
    <scope>NUCLEOTIDE SEQUENCE [LARGE SCALE GENOMIC DNA]</scope>
    <source>
        <strain>ATCC 204508 / S288c</strain>
    </source>
</reference>
<reference key="4">
    <citation type="journal article" date="2014" name="G3 (Bethesda)">
        <title>The reference genome sequence of Saccharomyces cerevisiae: Then and now.</title>
        <authorList>
            <person name="Engel S.R."/>
            <person name="Dietrich F.S."/>
            <person name="Fisk D.G."/>
            <person name="Binkley G."/>
            <person name="Balakrishnan R."/>
            <person name="Costanzo M.C."/>
            <person name="Dwight S.S."/>
            <person name="Hitz B.C."/>
            <person name="Karra K."/>
            <person name="Nash R.S."/>
            <person name="Weng S."/>
            <person name="Wong E.D."/>
            <person name="Lloyd P."/>
            <person name="Skrzypek M.S."/>
            <person name="Miyasato S.R."/>
            <person name="Simison M."/>
            <person name="Cherry J.M."/>
        </authorList>
    </citation>
    <scope>GENOME REANNOTATION</scope>
    <source>
        <strain>ATCC 204508 / S288c</strain>
    </source>
</reference>
<reference key="5">
    <citation type="journal article" date="1999" name="J. Cell Biol.">
        <title>Proteins connecting the nuclear pore complex with the nuclear interior.</title>
        <authorList>
            <person name="Strambio-de-Castillia C."/>
            <person name="Blobel G."/>
            <person name="Rout M.P."/>
        </authorList>
    </citation>
    <scope>FUNCTION</scope>
    <scope>FORMATION OF CHROMATIN EXCLUDING FILAMENTOUS STRUCTURES WITH MLP2</scope>
</reference>
<reference key="6">
    <citation type="journal article" date="2000" name="Nature">
        <title>Nuclear pore complexes in the organization of silent telomeric chromatin.</title>
        <authorList>
            <person name="Galy V."/>
            <person name="Olivo-Marin J.-C."/>
            <person name="Scherthan H."/>
            <person name="Doye V."/>
            <person name="Rascalou N."/>
            <person name="Nehrbass U."/>
        </authorList>
    </citation>
    <scope>FUNCTION</scope>
    <scope>PERINUCLEAR TELOMERE CLUSTERING</scope>
</reference>
<reference key="7">
    <citation type="journal article" date="2002" name="Nat. Cell Biol.">
        <title>Nuclear architecture and spatial positioning help establish transcriptional states of telomeres in yeast.</title>
        <authorList>
            <person name="Feuerbach F."/>
            <person name="Galy V."/>
            <person name="Trelles-Sticken E."/>
            <person name="Fromont-Racine M."/>
            <person name="Jacquier A."/>
            <person name="Gilson E."/>
            <person name="Olivo-Marin J.-C."/>
            <person name="Scherthan H."/>
            <person name="Nehrbass U."/>
        </authorList>
    </citation>
    <scope>FUNCTION</scope>
    <scope>PERINUCLEAR-DEPENDENT SILENCING</scope>
</reference>
<reference key="8">
    <citation type="journal article" date="2002" name="J. Struct. Biol.">
        <title>Myosin-like proteins 1 and 2 are not required for silencing or telomere anchoring, but act in the Tel1 pathway of telomere length control.</title>
        <authorList>
            <person name="Hediger F."/>
            <person name="Dubrana K."/>
            <person name="Gasser S.M."/>
        </authorList>
    </citation>
    <scope>FUNCTION</scope>
    <scope>TELOMERE LENGTH REGULATION</scope>
</reference>
<reference key="9">
    <citation type="journal article" date="2003" name="Nature">
        <title>Global analysis of protein expression in yeast.</title>
        <authorList>
            <person name="Ghaemmaghami S."/>
            <person name="Huh W.-K."/>
            <person name="Bower K."/>
            <person name="Howson R.W."/>
            <person name="Belle A."/>
            <person name="Dephoure N."/>
            <person name="O'Shea E.K."/>
            <person name="Weissman J.S."/>
        </authorList>
    </citation>
    <scope>LEVEL OF PROTEIN EXPRESSION [LARGE SCALE ANALYSIS]</scope>
</reference>
<reference key="10">
    <citation type="journal article" date="2003" name="Proc. Natl. Acad. Sci. U.S.A.">
        <title>The C-terminal domain of myosin-like protein 1 (Mlp1p) is a docking site for heterogeneous nuclear ribonucleoproteins that are required for mRNA export.</title>
        <authorList>
            <person name="Green D.M."/>
            <person name="Johnson C.P."/>
            <person name="Hagan H."/>
            <person name="Corbett A.H."/>
        </authorList>
    </citation>
    <scope>FUNCTION</scope>
    <scope>INTERACTION WITH NAB2</scope>
</reference>
<reference key="11">
    <citation type="journal article" date="2004" name="Cell">
        <title>Nuclear retention of unspliced mRNAs in yeast is mediated by perinuclear Mlp1.</title>
        <authorList>
            <person name="Galy V."/>
            <person name="Gadal O."/>
            <person name="Fromont-Racine M."/>
            <person name="Romano A."/>
            <person name="Jacquier A."/>
            <person name="Nehrbass U."/>
        </authorList>
    </citation>
    <scope>FUNCTION</scope>
    <scope>SUBCELLULAR LOCATION</scope>
    <scope>NUCLEAR RETENTION OF UNSPLICED PRE-MRNA</scope>
</reference>
<reference key="12">
    <citation type="journal article" date="2003" name="Nature">
        <title>Targets of the cyclin-dependent kinase Cdk1.</title>
        <authorList>
            <person name="Ubersax J.A."/>
            <person name="Woodbury E.L."/>
            <person name="Quang P.N."/>
            <person name="Paraz M."/>
            <person name="Blethrow J.D."/>
            <person name="Shah K."/>
            <person name="Shokat K.M."/>
            <person name="Morgan D.O."/>
        </authorList>
    </citation>
    <scope>PHOSPHORYLATION BY CDC28</scope>
</reference>
<reference key="13">
    <citation type="journal article" date="2005" name="J. Cell Biol.">
        <title>The nuclear pore complex-associated protein, Mlp2p, binds to the yeast spindle pole body and promotes its efficient assembly.</title>
        <authorList>
            <person name="Niepel M."/>
            <person name="Strambio-de-Castillia C."/>
            <person name="Fasolo J."/>
            <person name="Chait B.T."/>
            <person name="Rout M.P."/>
        </authorList>
    </citation>
    <scope>INTERACTION WITH MLP2</scope>
    <scope>SUBCELLULAR LOCATION</scope>
</reference>
<reference key="14">
    <citation type="journal article" date="2008" name="Mol. Cell. Proteomics">
        <title>A multidimensional chromatography technology for in-depth phosphoproteome analysis.</title>
        <authorList>
            <person name="Albuquerque C.P."/>
            <person name="Smolka M.B."/>
            <person name="Payne S.H."/>
            <person name="Bafna V."/>
            <person name="Eng J."/>
            <person name="Zhou H."/>
        </authorList>
    </citation>
    <scope>PHOSPHORYLATION [LARGE SCALE ANALYSIS] AT THR-337; SER-379; SER-1670; SER-1710 AND SER-1803</scope>
    <scope>IDENTIFICATION BY MASS SPECTROMETRY [LARGE SCALE ANALYSIS]</scope>
</reference>
<reference key="15">
    <citation type="journal article" date="2009" name="Science">
        <title>Global analysis of Cdk1 substrate phosphorylation sites provides insights into evolution.</title>
        <authorList>
            <person name="Holt L.J."/>
            <person name="Tuch B.B."/>
            <person name="Villen J."/>
            <person name="Johnson A.D."/>
            <person name="Gygi S.P."/>
            <person name="Morgan D.O."/>
        </authorList>
    </citation>
    <scope>PHOSPHORYLATION [LARGE SCALE ANALYSIS] AT THR-337; SER-1710 AND SER-1733</scope>
    <scope>IDENTIFICATION BY MASS SPECTROMETRY [LARGE SCALE ANALYSIS]</scope>
</reference>
<reference key="16">
    <citation type="journal article" date="2012" name="Proc. Natl. Acad. Sci. U.S.A.">
        <title>N-terminal acetylome analyses and functional insights of the N-terminal acetyltransferase NatB.</title>
        <authorList>
            <person name="Van Damme P."/>
            <person name="Lasa M."/>
            <person name="Polevoda B."/>
            <person name="Gazquez C."/>
            <person name="Elosegui-Artola A."/>
            <person name="Kim D.S."/>
            <person name="De Juan-Pardo E."/>
            <person name="Demeyer K."/>
            <person name="Hole K."/>
            <person name="Larrea E."/>
            <person name="Timmerman E."/>
            <person name="Prieto J."/>
            <person name="Arnesen T."/>
            <person name="Sherman F."/>
            <person name="Gevaert K."/>
            <person name="Aldabe R."/>
        </authorList>
    </citation>
    <scope>ACETYLATION [LARGE SCALE ANALYSIS] AT SER-2</scope>
    <scope>CLEAVAGE OF INITIATOR METHIONINE [LARGE SCALE ANALYSIS]</scope>
    <scope>IDENTIFICATION BY MASS SPECTROMETRY [LARGE SCALE ANALYSIS]</scope>
</reference>
<reference key="17">
    <citation type="journal article" date="2013" name="Mol. Biol. Cell">
        <title>The nuclear basket proteins Mlp1p and Mlp2p are part of a dynamic interactome including Esc1p and the proteasome.</title>
        <authorList>
            <person name="Niepel M."/>
            <person name="Molloy K.R."/>
            <person name="Williams R."/>
            <person name="Farr J.C."/>
            <person name="Meinema A.C."/>
            <person name="Vecchietti N."/>
            <person name="Cristea I.M."/>
            <person name="Chait B.T."/>
            <person name="Rout M.P."/>
            <person name="Strambio-De-Castillia C."/>
        </authorList>
    </citation>
    <scope>IDENTIFICATION BY MASS SPECTROMETRY</scope>
    <scope>FUNCTION</scope>
    <scope>IDENTIFICATION IN THE NUCLEAR PORE COMPLEX</scope>
    <scope>SUBCELLULAR LOCATION</scope>
</reference>
<dbReference type="EMBL" id="L01992">
    <property type="protein sequence ID" value="AAA34783.1"/>
    <property type="molecule type" value="Genomic_DNA"/>
</dbReference>
<dbReference type="EMBL" id="X73541">
    <property type="protein sequence ID" value="CAA51948.1"/>
    <property type="molecule type" value="Genomic_DNA"/>
</dbReference>
<dbReference type="EMBL" id="Z28320">
    <property type="protein sequence ID" value="CAA82174.1"/>
    <property type="molecule type" value="Genomic_DNA"/>
</dbReference>
<dbReference type="EMBL" id="BK006944">
    <property type="protein sequence ID" value="DAA09245.1"/>
    <property type="molecule type" value="Genomic_DNA"/>
</dbReference>
<dbReference type="PIR" id="S38173">
    <property type="entry name" value="S38173"/>
</dbReference>
<dbReference type="RefSeq" id="NP_013021.1">
    <property type="nucleotide sequence ID" value="NM_001179885.1"/>
</dbReference>
<dbReference type="SMR" id="Q02455"/>
<dbReference type="BioGRID" id="34226">
    <property type="interactions" value="335"/>
</dbReference>
<dbReference type="ComplexPortal" id="CPX-824">
    <property type="entry name" value="Nuclear pore complex"/>
</dbReference>
<dbReference type="DIP" id="DIP-6675N"/>
<dbReference type="FunCoup" id="Q02455">
    <property type="interactions" value="1353"/>
</dbReference>
<dbReference type="IntAct" id="Q02455">
    <property type="interactions" value="19"/>
</dbReference>
<dbReference type="MINT" id="Q02455"/>
<dbReference type="STRING" id="4932.YKR095W"/>
<dbReference type="TCDB" id="1.I.1.1.1">
    <property type="family name" value="the nuclear pore complex (npc) family"/>
</dbReference>
<dbReference type="CarbonylDB" id="Q02455"/>
<dbReference type="GlyGen" id="Q02455">
    <property type="glycosylation" value="2 sites, 1 O-linked glycan (2 sites)"/>
</dbReference>
<dbReference type="iPTMnet" id="Q02455"/>
<dbReference type="PaxDb" id="4932-YKR095W"/>
<dbReference type="PeptideAtlas" id="Q02455"/>
<dbReference type="EnsemblFungi" id="YKR095W_mRNA">
    <property type="protein sequence ID" value="YKR095W"/>
    <property type="gene ID" value="YKR095W"/>
</dbReference>
<dbReference type="GeneID" id="853970"/>
<dbReference type="KEGG" id="sce:YKR095W"/>
<dbReference type="AGR" id="SGD:S000001803"/>
<dbReference type="SGD" id="S000001803">
    <property type="gene designation" value="MLP1"/>
</dbReference>
<dbReference type="VEuPathDB" id="FungiDB:YKR095W"/>
<dbReference type="eggNOG" id="KOG4674">
    <property type="taxonomic scope" value="Eukaryota"/>
</dbReference>
<dbReference type="GeneTree" id="ENSGT00940000176562"/>
<dbReference type="HOGENOM" id="CLU_002365_0_0_1"/>
<dbReference type="InParanoid" id="Q02455"/>
<dbReference type="OMA" id="HAQQNYE"/>
<dbReference type="OrthoDB" id="343070at2759"/>
<dbReference type="BioCyc" id="YEAST:G3O-32058-MONOMER"/>
<dbReference type="Reactome" id="R-SCE-159236">
    <property type="pathway name" value="Transport of Mature mRNA derived from an Intron-Containing Transcript"/>
</dbReference>
<dbReference type="Reactome" id="R-SCE-3371453">
    <property type="pathway name" value="Regulation of HSF1-mediated heat shock response"/>
</dbReference>
<dbReference type="Reactome" id="R-SCE-4085377">
    <property type="pathway name" value="SUMOylation of SUMOylation proteins"/>
</dbReference>
<dbReference type="Reactome" id="R-SCE-4551638">
    <property type="pathway name" value="SUMOylation of chromatin organization proteins"/>
</dbReference>
<dbReference type="Reactome" id="R-SCE-4570464">
    <property type="pathway name" value="SUMOylation of RNA binding proteins"/>
</dbReference>
<dbReference type="BioGRID-ORCS" id="853970">
    <property type="hits" value="1 hit in 10 CRISPR screens"/>
</dbReference>
<dbReference type="PRO" id="PR:Q02455"/>
<dbReference type="Proteomes" id="UP000002311">
    <property type="component" value="Chromosome XI"/>
</dbReference>
<dbReference type="RNAct" id="Q02455">
    <property type="molecule type" value="protein"/>
</dbReference>
<dbReference type="GO" id="GO:0005635">
    <property type="term" value="C:nuclear envelope"/>
    <property type="evidence" value="ECO:0000314"/>
    <property type="project" value="SGD"/>
</dbReference>
<dbReference type="GO" id="GO:0005643">
    <property type="term" value="C:nuclear pore"/>
    <property type="evidence" value="ECO:0000318"/>
    <property type="project" value="GO_Central"/>
</dbReference>
<dbReference type="GO" id="GO:0044615">
    <property type="term" value="C:nuclear pore nuclear basket"/>
    <property type="evidence" value="ECO:0000314"/>
    <property type="project" value="SGD"/>
</dbReference>
<dbReference type="GO" id="GO:0005654">
    <property type="term" value="C:nucleoplasm"/>
    <property type="evidence" value="ECO:0000314"/>
    <property type="project" value="SGD"/>
</dbReference>
<dbReference type="GO" id="GO:0003729">
    <property type="term" value="F:mRNA binding"/>
    <property type="evidence" value="ECO:0007005"/>
    <property type="project" value="SGD"/>
</dbReference>
<dbReference type="GO" id="GO:0140586">
    <property type="term" value="F:promoter-terminator loop anchoring activity"/>
    <property type="evidence" value="ECO:0000315"/>
    <property type="project" value="SGD"/>
</dbReference>
<dbReference type="GO" id="GO:0043021">
    <property type="term" value="F:ribonucleoprotein complex binding"/>
    <property type="evidence" value="ECO:0000316"/>
    <property type="project" value="SGD"/>
</dbReference>
<dbReference type="GO" id="GO:0017056">
    <property type="term" value="F:structural constituent of nuclear pore"/>
    <property type="evidence" value="ECO:0000318"/>
    <property type="project" value="GO_Central"/>
</dbReference>
<dbReference type="GO" id="GO:0006281">
    <property type="term" value="P:DNA repair"/>
    <property type="evidence" value="ECO:0007669"/>
    <property type="project" value="UniProtKB-KW"/>
</dbReference>
<dbReference type="GO" id="GO:0006406">
    <property type="term" value="P:mRNA export from nucleus"/>
    <property type="evidence" value="ECO:0000318"/>
    <property type="project" value="GO_Central"/>
</dbReference>
<dbReference type="GO" id="GO:1901925">
    <property type="term" value="P:negative regulation of protein import into nucleus during spindle assembly checkpoint"/>
    <property type="evidence" value="ECO:0000316"/>
    <property type="project" value="SGD"/>
</dbReference>
<dbReference type="GO" id="GO:0071028">
    <property type="term" value="P:nuclear mRNA surveillance"/>
    <property type="evidence" value="ECO:0000315"/>
    <property type="project" value="SGD"/>
</dbReference>
<dbReference type="GO" id="GO:0006913">
    <property type="term" value="P:nucleocytoplasmic transport"/>
    <property type="evidence" value="ECO:0000303"/>
    <property type="project" value="ComplexPortal"/>
</dbReference>
<dbReference type="GO" id="GO:0016973">
    <property type="term" value="P:poly(A)+ mRNA export from nucleus"/>
    <property type="evidence" value="ECO:0000315"/>
    <property type="project" value="SGD"/>
</dbReference>
<dbReference type="GO" id="GO:0006606">
    <property type="term" value="P:protein import into nucleus"/>
    <property type="evidence" value="ECO:0000316"/>
    <property type="project" value="SGD"/>
</dbReference>
<dbReference type="GO" id="GO:0090204">
    <property type="term" value="P:protein localization to nuclear pore"/>
    <property type="evidence" value="ECO:0000315"/>
    <property type="project" value="SGD"/>
</dbReference>
<dbReference type="GO" id="GO:0034398">
    <property type="term" value="P:telomere tethering at nuclear periphery"/>
    <property type="evidence" value="ECO:0000316"/>
    <property type="project" value="SGD"/>
</dbReference>
<dbReference type="InterPro" id="IPR001611">
    <property type="entry name" value="Leu-rich_rpt"/>
</dbReference>
<dbReference type="InterPro" id="IPR012929">
    <property type="entry name" value="TPR/MLP1"/>
</dbReference>
<dbReference type="PANTHER" id="PTHR18898:SF2">
    <property type="entry name" value="NUCLEOPROTEIN TPR"/>
    <property type="match status" value="1"/>
</dbReference>
<dbReference type="PANTHER" id="PTHR18898">
    <property type="entry name" value="NUCLEOPROTEIN TPR-RELATED"/>
    <property type="match status" value="1"/>
</dbReference>
<dbReference type="Pfam" id="PF25481">
    <property type="entry name" value="Nucleoprot-TPR"/>
    <property type="match status" value="1"/>
</dbReference>
<dbReference type="Pfam" id="PF07926">
    <property type="entry name" value="TPR_MLP1_2"/>
    <property type="match status" value="1"/>
</dbReference>
<dbReference type="PROSITE" id="PS51450">
    <property type="entry name" value="LRR"/>
    <property type="match status" value="1"/>
</dbReference>
<evidence type="ECO:0000255" key="1"/>
<evidence type="ECO:0000256" key="2">
    <source>
        <dbReference type="SAM" id="MobiDB-lite"/>
    </source>
</evidence>
<evidence type="ECO:0000269" key="3">
    <source>
    </source>
</evidence>
<evidence type="ECO:0000269" key="4">
    <source>
    </source>
</evidence>
<evidence type="ECO:0000269" key="5">
    <source>
    </source>
</evidence>
<evidence type="ECO:0000269" key="6">
    <source>
    </source>
</evidence>
<evidence type="ECO:0000269" key="7">
    <source>
    </source>
</evidence>
<evidence type="ECO:0000269" key="8">
    <source>
    </source>
</evidence>
<evidence type="ECO:0000269" key="9">
    <source>
    </source>
</evidence>
<evidence type="ECO:0000269" key="10">
    <source>
    </source>
</evidence>
<evidence type="ECO:0000269" key="11">
    <source>
    </source>
</evidence>
<evidence type="ECO:0000269" key="12">
    <source>
    </source>
</evidence>
<evidence type="ECO:0000305" key="13"/>
<evidence type="ECO:0007744" key="14">
    <source>
    </source>
</evidence>
<evidence type="ECO:0007744" key="15">
    <source>
    </source>
</evidence>
<evidence type="ECO:0007744" key="16">
    <source>
    </source>
</evidence>
<comment type="function">
    <text evidence="3 4 5 6 7 10 12">Together with the closely related MLP2, involved in the structural and functional organization of perinuclear chromatin (PubMed:10638763). Together with MLP2, associates with the nuclear pore complex and form filamentous structures along the nuclear periphery (PubMed:10085285, PubMed:24152732). Has a role in the localization of Esc1 to nucleolar regions (PubMed:24152732). Together with MLP2, mediates tethering of the some telomeres to the nuclear periphery, probably mediated by YKU70/YKU80 (HDF1/HDF2) heterodimer and show perinuclear location dependent silencing (PubMed:11862215). MLP1 and MLP2 are involved in telomere length regulation but not silencing or telomere anchoring (PubMed:12490156). Recognizes the 5'-splice site of pre-mRNAs and retains unspliced pre-mRNA in the nucleus without affecting splicing itself (PubMed:12490156, PubMed:12531921, PubMed:14718167).</text>
</comment>
<comment type="subunit">
    <text evidence="7 11 12">Component of the nuclear pore complex (NPC) (PubMed:24152732). NPC constitutes the exclusive means of nucleocytoplasmic transport (PubMed:24152732). NPCs allow the passive diffusion of ions and small molecules and the active, nuclear transport receptor-mediated bidirectional transport of macromolecules such as proteins, RNAs, ribonucleoparticles (RNPs), and ribosomal subunits across the nuclear envelope (PubMed:24152732). Due to its 8-fold rotational symmetry, all subunits are present with 8 copies or multiples thereof (PubMed:24152732). Interacts with NAB2, a hnRNP required for mRNA export (PubMed:12531921). Interacts with MLP2 (PubMed:16027220).</text>
</comment>
<comment type="interaction">
    <interactant intactId="EBI-11009">
        <id>Q02455</id>
    </interactant>
    <interactant intactId="EBI-25261">
        <id>P40457</id>
        <label>MLP2</label>
    </interactant>
    <organismsDiffer>false</organismsDiffer>
    <experiments>3</experiments>
</comment>
<comment type="interaction">
    <interactant intactId="EBI-11009">
        <id>Q02455</id>
    </interactant>
    <interactant intactId="EBI-11770">
        <id>P32505</id>
        <label>NAB2</label>
    </interactant>
    <organismsDiffer>false</organismsDiffer>
    <experiments>4</experiments>
</comment>
<comment type="subcellular location">
    <subcellularLocation>
        <location evidence="10 11">Nucleus</location>
    </subcellularLocation>
    <subcellularLocation>
        <location evidence="12">Nucleus</location>
        <location evidence="12">Nuclear pore complex</location>
    </subcellularLocation>
    <text evidence="11">Distributed fairly evenly along a C-shaped portion of the nuclear periphery, where the spindle pole body localizes in 90% of the cases.</text>
</comment>
<comment type="PTM">
    <text evidence="9">May be phosphorylated by CDC28.</text>
</comment>
<comment type="miscellaneous">
    <text evidence="8">Present with 2710 molecules/cell in log phase SD medium.</text>
</comment>
<comment type="caution">
    <text evidence="13">PubMed:8154186 misquoted the gene name as 'MPL1'.</text>
</comment>
<protein>
    <recommendedName>
        <fullName>Protein MLP1</fullName>
    </recommendedName>
    <alternativeName>
        <fullName>Myosin-like protein 1</fullName>
    </alternativeName>
</protein>